<keyword id="KW-1185">Reference proteome</keyword>
<keyword id="KW-0687">Ribonucleoprotein</keyword>
<keyword id="KW-0689">Ribosomal protein</keyword>
<keyword id="KW-0694">RNA-binding</keyword>
<keyword id="KW-0699">rRNA-binding</keyword>
<keyword id="KW-0820">tRNA-binding</keyword>
<sequence length="138" mass="15617">MLQPKRRKYRKEQKGRNTGVATRGNAVSFGEYGLKAIGRGRLTARQIEAARRAMTRHIKRGGRIWIRIFPDKPISQKPAEVRMGNGKGNPEYYVAEIQPGKMLYEMDGVSEELAREAFRLAAAKLPLKTTFMVRQLGA</sequence>
<dbReference type="EMBL" id="CP001043">
    <property type="protein sequence ID" value="ACC72005.1"/>
    <property type="molecule type" value="Genomic_DNA"/>
</dbReference>
<dbReference type="RefSeq" id="WP_012402192.1">
    <property type="nucleotide sequence ID" value="NZ_CADFGH010000028.1"/>
</dbReference>
<dbReference type="SMR" id="B2JI59"/>
<dbReference type="STRING" id="391038.Bphy_2833"/>
<dbReference type="KEGG" id="bph:Bphy_2833"/>
<dbReference type="eggNOG" id="COG0197">
    <property type="taxonomic scope" value="Bacteria"/>
</dbReference>
<dbReference type="HOGENOM" id="CLU_078858_2_1_4"/>
<dbReference type="OrthoDB" id="9802589at2"/>
<dbReference type="Proteomes" id="UP000001192">
    <property type="component" value="Chromosome 1"/>
</dbReference>
<dbReference type="GO" id="GO:0022625">
    <property type="term" value="C:cytosolic large ribosomal subunit"/>
    <property type="evidence" value="ECO:0007669"/>
    <property type="project" value="TreeGrafter"/>
</dbReference>
<dbReference type="GO" id="GO:0019843">
    <property type="term" value="F:rRNA binding"/>
    <property type="evidence" value="ECO:0007669"/>
    <property type="project" value="UniProtKB-UniRule"/>
</dbReference>
<dbReference type="GO" id="GO:0003735">
    <property type="term" value="F:structural constituent of ribosome"/>
    <property type="evidence" value="ECO:0007669"/>
    <property type="project" value="InterPro"/>
</dbReference>
<dbReference type="GO" id="GO:0000049">
    <property type="term" value="F:tRNA binding"/>
    <property type="evidence" value="ECO:0007669"/>
    <property type="project" value="UniProtKB-KW"/>
</dbReference>
<dbReference type="GO" id="GO:0006412">
    <property type="term" value="P:translation"/>
    <property type="evidence" value="ECO:0007669"/>
    <property type="project" value="UniProtKB-UniRule"/>
</dbReference>
<dbReference type="CDD" id="cd01433">
    <property type="entry name" value="Ribosomal_L16_L10e"/>
    <property type="match status" value="1"/>
</dbReference>
<dbReference type="FunFam" id="3.90.1170.10:FF:000001">
    <property type="entry name" value="50S ribosomal protein L16"/>
    <property type="match status" value="1"/>
</dbReference>
<dbReference type="Gene3D" id="3.90.1170.10">
    <property type="entry name" value="Ribosomal protein L10e/L16"/>
    <property type="match status" value="1"/>
</dbReference>
<dbReference type="HAMAP" id="MF_01342">
    <property type="entry name" value="Ribosomal_uL16"/>
    <property type="match status" value="1"/>
</dbReference>
<dbReference type="InterPro" id="IPR047873">
    <property type="entry name" value="Ribosomal_uL16"/>
</dbReference>
<dbReference type="InterPro" id="IPR000114">
    <property type="entry name" value="Ribosomal_uL16_bact-type"/>
</dbReference>
<dbReference type="InterPro" id="IPR020798">
    <property type="entry name" value="Ribosomal_uL16_CS"/>
</dbReference>
<dbReference type="InterPro" id="IPR016180">
    <property type="entry name" value="Ribosomal_uL16_dom"/>
</dbReference>
<dbReference type="InterPro" id="IPR036920">
    <property type="entry name" value="Ribosomal_uL16_sf"/>
</dbReference>
<dbReference type="NCBIfam" id="TIGR01164">
    <property type="entry name" value="rplP_bact"/>
    <property type="match status" value="1"/>
</dbReference>
<dbReference type="PANTHER" id="PTHR12220">
    <property type="entry name" value="50S/60S RIBOSOMAL PROTEIN L16"/>
    <property type="match status" value="1"/>
</dbReference>
<dbReference type="PANTHER" id="PTHR12220:SF13">
    <property type="entry name" value="LARGE RIBOSOMAL SUBUNIT PROTEIN UL16M"/>
    <property type="match status" value="1"/>
</dbReference>
<dbReference type="Pfam" id="PF00252">
    <property type="entry name" value="Ribosomal_L16"/>
    <property type="match status" value="1"/>
</dbReference>
<dbReference type="PRINTS" id="PR00060">
    <property type="entry name" value="RIBOSOMALL16"/>
</dbReference>
<dbReference type="SUPFAM" id="SSF54686">
    <property type="entry name" value="Ribosomal protein L16p/L10e"/>
    <property type="match status" value="1"/>
</dbReference>
<dbReference type="PROSITE" id="PS00586">
    <property type="entry name" value="RIBOSOMAL_L16_1"/>
    <property type="match status" value="1"/>
</dbReference>
<comment type="function">
    <text evidence="1">Binds 23S rRNA and is also seen to make contacts with the A and possibly P site tRNAs.</text>
</comment>
<comment type="subunit">
    <text evidence="1">Part of the 50S ribosomal subunit.</text>
</comment>
<comment type="similarity">
    <text evidence="1">Belongs to the universal ribosomal protein uL16 family.</text>
</comment>
<evidence type="ECO:0000255" key="1">
    <source>
        <dbReference type="HAMAP-Rule" id="MF_01342"/>
    </source>
</evidence>
<evidence type="ECO:0000256" key="2">
    <source>
        <dbReference type="SAM" id="MobiDB-lite"/>
    </source>
</evidence>
<evidence type="ECO:0000305" key="3"/>
<gene>
    <name evidence="1" type="primary">rplP</name>
    <name type="ordered locus">Bphy_2833</name>
</gene>
<name>RL16_PARP8</name>
<protein>
    <recommendedName>
        <fullName evidence="1">Large ribosomal subunit protein uL16</fullName>
    </recommendedName>
    <alternativeName>
        <fullName evidence="3">50S ribosomal protein L16</fullName>
    </alternativeName>
</protein>
<reference key="1">
    <citation type="journal article" date="2014" name="Stand. Genomic Sci.">
        <title>Complete genome sequence of Burkholderia phymatum STM815(T), a broad host range and efficient nitrogen-fixing symbiont of Mimosa species.</title>
        <authorList>
            <person name="Moulin L."/>
            <person name="Klonowska A."/>
            <person name="Caroline B."/>
            <person name="Booth K."/>
            <person name="Vriezen J.A."/>
            <person name="Melkonian R."/>
            <person name="James E.K."/>
            <person name="Young J.P."/>
            <person name="Bena G."/>
            <person name="Hauser L."/>
            <person name="Land M."/>
            <person name="Kyrpides N."/>
            <person name="Bruce D."/>
            <person name="Chain P."/>
            <person name="Copeland A."/>
            <person name="Pitluck S."/>
            <person name="Woyke T."/>
            <person name="Lizotte-Waniewski M."/>
            <person name="Bristow J."/>
            <person name="Riley M."/>
        </authorList>
    </citation>
    <scope>NUCLEOTIDE SEQUENCE [LARGE SCALE GENOMIC DNA]</scope>
    <source>
        <strain>DSM 17167 / CIP 108236 / LMG 21445 / STM815</strain>
    </source>
</reference>
<accession>B2JI59</accession>
<organism>
    <name type="scientific">Paraburkholderia phymatum (strain DSM 17167 / CIP 108236 / LMG 21445 / STM815)</name>
    <name type="common">Burkholderia phymatum</name>
    <dbReference type="NCBI Taxonomy" id="391038"/>
    <lineage>
        <taxon>Bacteria</taxon>
        <taxon>Pseudomonadati</taxon>
        <taxon>Pseudomonadota</taxon>
        <taxon>Betaproteobacteria</taxon>
        <taxon>Burkholderiales</taxon>
        <taxon>Burkholderiaceae</taxon>
        <taxon>Paraburkholderia</taxon>
    </lineage>
</organism>
<feature type="chain" id="PRO_1000142939" description="Large ribosomal subunit protein uL16">
    <location>
        <begin position="1"/>
        <end position="138"/>
    </location>
</feature>
<feature type="region of interest" description="Disordered" evidence="2">
    <location>
        <begin position="1"/>
        <end position="22"/>
    </location>
</feature>
<feature type="compositionally biased region" description="Basic residues" evidence="2">
    <location>
        <begin position="1"/>
        <end position="13"/>
    </location>
</feature>
<proteinExistence type="inferred from homology"/>